<keyword id="KW-0002">3D-structure</keyword>
<keyword id="KW-0028">Amino-acid biosynthesis</keyword>
<keyword id="KW-0100">Branched-chain amino acid biosynthesis</keyword>
<keyword id="KW-0963">Cytoplasm</keyword>
<keyword id="KW-0432">Leucine biosynthesis</keyword>
<keyword id="KW-0460">Magnesium</keyword>
<keyword id="KW-0464">Manganese</keyword>
<keyword id="KW-0479">Metal-binding</keyword>
<keyword id="KW-0520">NAD</keyword>
<keyword id="KW-0560">Oxidoreductase</keyword>
<keyword id="KW-1185">Reference proteome</keyword>
<reference key="1">
    <citation type="journal article" date="1992" name="Biochim. Biophys. Acta">
        <title>The nucleotide sequence of leuB from Salmonella typhimurium.</title>
        <authorList>
            <person name="Andreadis A."/>
            <person name="Rosenthal E.R."/>
        </authorList>
    </citation>
    <scope>NUCLEOTIDE SEQUENCE [GENOMIC DNA]</scope>
    <source>
        <strain>LT2</strain>
    </source>
</reference>
<reference key="2">
    <citation type="journal article" date="1995" name="Gene">
        <title>Revision of the amino-acid sequence of 3-isopropylmalate dehydrogenase from Salmonella typhimurium by means of X-ray crystallography.</title>
        <authorList>
            <person name="Kryger G."/>
            <person name="Wallon G."/>
            <person name="Lovett S.T."/>
            <person name="Ringe D."/>
            <person name="Petsko G.A."/>
        </authorList>
    </citation>
    <scope>NUCLEOTIDE SEQUENCE [GENOMIC DNA]</scope>
    <scope>SEQUENCE REVISION</scope>
    <source>
        <strain>LT2</strain>
    </source>
</reference>
<reference key="3">
    <citation type="journal article" date="2001" name="Nature">
        <title>Complete genome sequence of Salmonella enterica serovar Typhimurium LT2.</title>
        <authorList>
            <person name="McClelland M."/>
            <person name="Sanderson K.E."/>
            <person name="Spieth J."/>
            <person name="Clifton S.W."/>
            <person name="Latreille P."/>
            <person name="Courtney L."/>
            <person name="Porwollik S."/>
            <person name="Ali J."/>
            <person name="Dante M."/>
            <person name="Du F."/>
            <person name="Hou S."/>
            <person name="Layman D."/>
            <person name="Leonard S."/>
            <person name="Nguyen C."/>
            <person name="Scott K."/>
            <person name="Holmes A."/>
            <person name="Grewal N."/>
            <person name="Mulvaney E."/>
            <person name="Ryan E."/>
            <person name="Sun H."/>
            <person name="Florea L."/>
            <person name="Miller W."/>
            <person name="Stoneking T."/>
            <person name="Nhan M."/>
            <person name="Waterston R."/>
            <person name="Wilson R.K."/>
        </authorList>
    </citation>
    <scope>NUCLEOTIDE SEQUENCE [LARGE SCALE GENOMIC DNA]</scope>
    <source>
        <strain>LT2 / SGSC1412 / ATCC 700720</strain>
    </source>
</reference>
<reference key="4">
    <citation type="journal article" date="1963" name="Biochemistry">
        <title>The biosynthesis of leucine. III. The conversion of alpha-hydroxy-beta-carboxyisocaproate to alpha-ketoisocaproate.</title>
        <authorList>
            <person name="Burns R.O."/>
            <person name="Umbarger H.E."/>
            <person name="Gross S.R."/>
        </authorList>
    </citation>
    <scope>FUNCTION</scope>
    <scope>CATALYTIC ACTIVITY</scope>
    <scope>COFACTOR</scope>
    <scope>BIOPHYSICOCHEMICAL PROPERTIES</scope>
    <source>
        <strain>LT2</strain>
    </source>
</reference>
<reference key="5">
    <citation type="journal article" date="1969" name="J. Biol. Chem.">
        <title>Purification and properties of beta-isopropylmalate dehydrogenase.</title>
        <authorList>
            <person name="Parsons S.J."/>
            <person name="Burns R.O."/>
        </authorList>
    </citation>
    <scope>FUNCTION</scope>
    <scope>CATALYTIC ACTIVITY</scope>
    <scope>ACTIVITY REGULATION</scope>
    <scope>BIOPHYSICOCHEMICAL PROPERTIES</scope>
    <scope>SUBUNIT</scope>
</reference>
<reference key="6">
    <citation type="journal article" date="1997" name="J. Mol. Biol.">
        <title>Crystal structures of Escherichia coli and Salmonella typhimurium 3-isopropylmalate dehydrogenase and comparison with their thermophilic counterpart from Thermus thermophilus.</title>
        <authorList>
            <person name="Wallon G."/>
            <person name="Kryger G."/>
            <person name="Lovett S.T."/>
            <person name="Oshima T."/>
            <person name="Ringe D."/>
            <person name="Petsko G.A."/>
        </authorList>
    </citation>
    <scope>X-RAY CRYSTALLOGRAPHY (2.06 ANGSTROMS) IN COMPLEX WITH MANGANESE IONS</scope>
    <scope>SUBUNIT</scope>
</reference>
<dbReference type="EC" id="1.1.1.85" evidence="1 2 3"/>
<dbReference type="EMBL" id="X53376">
    <property type="protein sequence ID" value="CAA37456.1"/>
    <property type="molecule type" value="Genomic_DNA"/>
</dbReference>
<dbReference type="EMBL" id="U20795">
    <property type="protein sequence ID" value="AAB60185.1"/>
    <property type="molecule type" value="Genomic_DNA"/>
</dbReference>
<dbReference type="EMBL" id="AE006468">
    <property type="protein sequence ID" value="AAL19076.1"/>
    <property type="molecule type" value="Genomic_DNA"/>
</dbReference>
<dbReference type="PIR" id="S20606">
    <property type="entry name" value="S20606"/>
</dbReference>
<dbReference type="RefSeq" id="NP_459117.1">
    <property type="nucleotide sequence ID" value="NC_003197.2"/>
</dbReference>
<dbReference type="RefSeq" id="WP_000042325.1">
    <property type="nucleotide sequence ID" value="NC_003197.2"/>
</dbReference>
<dbReference type="PDB" id="1CNZ">
    <property type="method" value="X-ray"/>
    <property type="resolution" value="1.76 A"/>
    <property type="chains" value="A/B=1-363"/>
</dbReference>
<dbReference type="PDBsum" id="1CNZ"/>
<dbReference type="SMR" id="P37412"/>
<dbReference type="STRING" id="99287.STM0112"/>
<dbReference type="PaxDb" id="99287-STM0112"/>
<dbReference type="GeneID" id="1251630"/>
<dbReference type="KEGG" id="stm:STM0112"/>
<dbReference type="PATRIC" id="fig|99287.12.peg.118"/>
<dbReference type="HOGENOM" id="CLU_031953_0_3_6"/>
<dbReference type="OMA" id="EYDLGAR"/>
<dbReference type="PhylomeDB" id="P37412"/>
<dbReference type="BioCyc" id="SENT99287:STM0112-MONOMER"/>
<dbReference type="BRENDA" id="1.1.1.85">
    <property type="organism ID" value="5542"/>
</dbReference>
<dbReference type="UniPathway" id="UPA00048">
    <property type="reaction ID" value="UER00072"/>
</dbReference>
<dbReference type="EvolutionaryTrace" id="P37412"/>
<dbReference type="Proteomes" id="UP000001014">
    <property type="component" value="Chromosome"/>
</dbReference>
<dbReference type="GO" id="GO:0005829">
    <property type="term" value="C:cytosol"/>
    <property type="evidence" value="ECO:0000318"/>
    <property type="project" value="GO_Central"/>
</dbReference>
<dbReference type="GO" id="GO:0003862">
    <property type="term" value="F:3-isopropylmalate dehydrogenase activity"/>
    <property type="evidence" value="ECO:0000318"/>
    <property type="project" value="GO_Central"/>
</dbReference>
<dbReference type="GO" id="GO:0000287">
    <property type="term" value="F:magnesium ion binding"/>
    <property type="evidence" value="ECO:0007669"/>
    <property type="project" value="InterPro"/>
</dbReference>
<dbReference type="GO" id="GO:0051287">
    <property type="term" value="F:NAD binding"/>
    <property type="evidence" value="ECO:0007669"/>
    <property type="project" value="InterPro"/>
</dbReference>
<dbReference type="GO" id="GO:0009098">
    <property type="term" value="P:L-leucine biosynthetic process"/>
    <property type="evidence" value="ECO:0000318"/>
    <property type="project" value="GO_Central"/>
</dbReference>
<dbReference type="FunFam" id="3.40.718.10:FF:000004">
    <property type="entry name" value="3-isopropylmalate dehydrogenase"/>
    <property type="match status" value="1"/>
</dbReference>
<dbReference type="Gene3D" id="3.40.718.10">
    <property type="entry name" value="Isopropylmalate Dehydrogenase"/>
    <property type="match status" value="1"/>
</dbReference>
<dbReference type="HAMAP" id="MF_01033">
    <property type="entry name" value="LeuB_type1"/>
    <property type="match status" value="1"/>
</dbReference>
<dbReference type="InterPro" id="IPR019818">
    <property type="entry name" value="IsoCit/isopropylmalate_DH_CS"/>
</dbReference>
<dbReference type="InterPro" id="IPR024084">
    <property type="entry name" value="IsoPropMal-DH-like_dom"/>
</dbReference>
<dbReference type="InterPro" id="IPR004429">
    <property type="entry name" value="Isopropylmalate_DH"/>
</dbReference>
<dbReference type="NCBIfam" id="TIGR00169">
    <property type="entry name" value="leuB"/>
    <property type="match status" value="1"/>
</dbReference>
<dbReference type="PANTHER" id="PTHR42979">
    <property type="entry name" value="3-ISOPROPYLMALATE DEHYDROGENASE"/>
    <property type="match status" value="1"/>
</dbReference>
<dbReference type="PANTHER" id="PTHR42979:SF1">
    <property type="entry name" value="3-ISOPROPYLMALATE DEHYDROGENASE"/>
    <property type="match status" value="1"/>
</dbReference>
<dbReference type="Pfam" id="PF00180">
    <property type="entry name" value="Iso_dh"/>
    <property type="match status" value="1"/>
</dbReference>
<dbReference type="SMART" id="SM01329">
    <property type="entry name" value="Iso_dh"/>
    <property type="match status" value="1"/>
</dbReference>
<dbReference type="SUPFAM" id="SSF53659">
    <property type="entry name" value="Isocitrate/Isopropylmalate dehydrogenase-like"/>
    <property type="match status" value="1"/>
</dbReference>
<dbReference type="PROSITE" id="PS00470">
    <property type="entry name" value="IDH_IMDH"/>
    <property type="match status" value="1"/>
</dbReference>
<gene>
    <name evidence="1 5" type="primary">leuB</name>
    <name type="ordered locus">STM0112</name>
</gene>
<organism>
    <name type="scientific">Salmonella typhimurium (strain LT2 / SGSC1412 / ATCC 700720)</name>
    <dbReference type="NCBI Taxonomy" id="99287"/>
    <lineage>
        <taxon>Bacteria</taxon>
        <taxon>Pseudomonadati</taxon>
        <taxon>Pseudomonadota</taxon>
        <taxon>Gammaproteobacteria</taxon>
        <taxon>Enterobacterales</taxon>
        <taxon>Enterobacteriaceae</taxon>
        <taxon>Salmonella</taxon>
    </lineage>
</organism>
<sequence>MSKNYHIAVLPGDGIGPEVMAQALKVMDAVRSRFDMRITTSHYDVGGIAIDNHGHPLPKATVEGCEQADAILFGSVGGPKWENLPPESQPERGALLPLRKHFKLFSNLRPAKLYQGLEAFCPLRADIAANGFDILCVRELTGGIYFGQPKGREGSGQYEKAFDTEVYHRFEIERIARIAFESARKRRRKVTSIDKANVLQSSILWREIVNDVAKTYPDVELAHMYIDNATMQLIKDPSQFDVLLCSNLFGDILSDECAMITGSMGMLPSASLNEQGFGLYEPAGGSAPDIAGKNIANPIAQILSLALLLRYSLDANDAATAIEQAINRALEEGVRTGDLARGAAAVSTDEMGDIIARYVAEGV</sequence>
<comment type="function">
    <text evidence="1 2 3">Catalyzes the oxidation of 3-carboxy-2-hydroxy-4-methylpentanoate (3-isopropylmalate) to 3-carboxy-4-methyl-2-oxopentanoate. The product decarboxylates to 4-methyl-2 oxopentanoate.</text>
</comment>
<comment type="catalytic activity">
    <reaction evidence="1 2 3">
        <text>(2R,3S)-3-isopropylmalate + NAD(+) = 4-methyl-2-oxopentanoate + CO2 + NADH</text>
        <dbReference type="Rhea" id="RHEA:32271"/>
        <dbReference type="ChEBI" id="CHEBI:16526"/>
        <dbReference type="ChEBI" id="CHEBI:17865"/>
        <dbReference type="ChEBI" id="CHEBI:35121"/>
        <dbReference type="ChEBI" id="CHEBI:57540"/>
        <dbReference type="ChEBI" id="CHEBI:57945"/>
        <dbReference type="EC" id="1.1.1.85"/>
    </reaction>
</comment>
<comment type="cofactor">
    <cofactor evidence="1 2">
        <name>Mg(2+)</name>
        <dbReference type="ChEBI" id="CHEBI:18420"/>
    </cofactor>
    <cofactor evidence="1 2 4">
        <name>Mn(2+)</name>
        <dbReference type="ChEBI" id="CHEBI:29035"/>
    </cofactor>
    <text evidence="1">Binds 1 Mg(2+) or Mn(2+) ion per subunit.</text>
</comment>
<comment type="activity regulation">
    <text evidence="3">Inhibited by p-hydroxymercuribenzoate and N-ethylmaleimide, but not by iodoacetate or iodoacetamide.</text>
</comment>
<comment type="biophysicochemical properties">
    <kinetics>
        <KM evidence="3">19 uM for beta-isopropylmalate</KM>
        <KM evidence="3">0.1 mM for NAD</KM>
    </kinetics>
    <phDependence>
        <text evidence="2 3">Optimum pH is 9.0 (PubMed:4889950). Optimum pH is 9.5 (PubMed:14087358).</text>
    </phDependence>
</comment>
<comment type="pathway">
    <text evidence="1">Amino-acid biosynthesis; L-leucine biosynthesis; L-leucine from 3-methyl-2-oxobutanoate: step 3/4.</text>
</comment>
<comment type="subunit">
    <text evidence="1 3 4">Homodimer.</text>
</comment>
<comment type="subcellular location">
    <subcellularLocation>
        <location evidence="1">Cytoplasm</location>
    </subcellularLocation>
</comment>
<comment type="similarity">
    <text evidence="1 7">Belongs to the isocitrate and isopropylmalate dehydrogenases family. LeuB type 1 subfamily.</text>
</comment>
<proteinExistence type="evidence at protein level"/>
<evidence type="ECO:0000255" key="1">
    <source>
        <dbReference type="HAMAP-Rule" id="MF_01033"/>
    </source>
</evidence>
<evidence type="ECO:0000269" key="2">
    <source>
    </source>
</evidence>
<evidence type="ECO:0000269" key="3">
    <source>
    </source>
</evidence>
<evidence type="ECO:0000269" key="4">
    <source>
    </source>
</evidence>
<evidence type="ECO:0000303" key="5">
    <source>
    </source>
</evidence>
<evidence type="ECO:0000303" key="6">
    <source>
    </source>
</evidence>
<evidence type="ECO:0000305" key="7"/>
<evidence type="ECO:0007744" key="8">
    <source>
        <dbReference type="PDB" id="1CNZ"/>
    </source>
</evidence>
<evidence type="ECO:0007829" key="9">
    <source>
        <dbReference type="PDB" id="1CNZ"/>
    </source>
</evidence>
<name>LEU3_SALTY</name>
<accession>P37412</accession>
<protein>
    <recommendedName>
        <fullName evidence="1 6">3-isopropylmalate dehydrogenase</fullName>
        <ecNumber evidence="1 2 3">1.1.1.85</ecNumber>
    </recommendedName>
    <alternativeName>
        <fullName evidence="1">3-IPM-DH</fullName>
    </alternativeName>
    <alternativeName>
        <fullName evidence="1">Beta-IPM dehydrogenase</fullName>
        <shortName evidence="1">IMDH</shortName>
    </alternativeName>
</protein>
<feature type="chain" id="PRO_0000083743" description="3-isopropylmalate dehydrogenase">
    <location>
        <begin position="1"/>
        <end position="363"/>
    </location>
</feature>
<feature type="binding site" evidence="1">
    <location>
        <begin position="78"/>
        <end position="91"/>
    </location>
    <ligand>
        <name>NAD(+)</name>
        <dbReference type="ChEBI" id="CHEBI:57540"/>
    </ligand>
</feature>
<feature type="binding site" evidence="1">
    <location>
        <position position="99"/>
    </location>
    <ligand>
        <name>substrate</name>
    </ligand>
</feature>
<feature type="binding site" evidence="1">
    <location>
        <position position="109"/>
    </location>
    <ligand>
        <name>substrate</name>
    </ligand>
</feature>
<feature type="binding site" evidence="1">
    <location>
        <position position="138"/>
    </location>
    <ligand>
        <name>substrate</name>
    </ligand>
</feature>
<feature type="binding site" evidence="1">
    <location>
        <position position="227"/>
    </location>
    <ligand>
        <name>Mg(2+)</name>
        <dbReference type="ChEBI" id="CHEBI:18420"/>
    </ligand>
</feature>
<feature type="binding site" evidence="4 8">
    <location>
        <position position="227"/>
    </location>
    <ligand>
        <name>Mn(2+)</name>
        <dbReference type="ChEBI" id="CHEBI:29035"/>
    </ligand>
</feature>
<feature type="binding site" evidence="1">
    <location>
        <position position="227"/>
    </location>
    <ligand>
        <name>substrate</name>
    </ligand>
</feature>
<feature type="binding site" evidence="1">
    <location>
        <position position="251"/>
    </location>
    <ligand>
        <name>Mg(2+)</name>
        <dbReference type="ChEBI" id="CHEBI:18420"/>
    </ligand>
</feature>
<feature type="binding site" evidence="4 8">
    <location>
        <position position="251"/>
    </location>
    <ligand>
        <name>Mn(2+)</name>
        <dbReference type="ChEBI" id="CHEBI:29035"/>
    </ligand>
</feature>
<feature type="binding site" evidence="1">
    <location>
        <position position="255"/>
    </location>
    <ligand>
        <name>Mg(2+)</name>
        <dbReference type="ChEBI" id="CHEBI:18420"/>
    </ligand>
</feature>
<feature type="binding site" evidence="4 8">
    <location>
        <position position="255"/>
    </location>
    <ligand>
        <name>Mn(2+)</name>
        <dbReference type="ChEBI" id="CHEBI:29035"/>
    </ligand>
</feature>
<feature type="binding site" evidence="1">
    <location>
        <begin position="285"/>
        <end position="297"/>
    </location>
    <ligand>
        <name>NAD(+)</name>
        <dbReference type="ChEBI" id="CHEBI:57540"/>
    </ligand>
</feature>
<feature type="site" description="Important for catalysis" evidence="1">
    <location>
        <position position="145"/>
    </location>
</feature>
<feature type="site" description="Important for catalysis" evidence="1">
    <location>
        <position position="195"/>
    </location>
</feature>
<feature type="sequence conflict" description="In Ref. 1; CAA37456." evidence="7" ref="1">
    <original>SRFDMRITT</original>
    <variation>VLICVYH</variation>
    <location>
        <begin position="32"/>
        <end position="40"/>
    </location>
</feature>
<feature type="sequence conflict" description="In Ref. 1; CAA37456." evidence="7" ref="1">
    <original>NHGH</original>
    <variation>SSGI</variation>
    <location>
        <begin position="52"/>
        <end position="55"/>
    </location>
</feature>
<feature type="sequence conflict" description="In Ref. 1." evidence="7" ref="1">
    <original>WENLPPESQPERGA</original>
    <variation>MGKFAPGKPAGARR</variation>
    <location>
        <begin position="81"/>
        <end position="94"/>
    </location>
</feature>
<feature type="sequence conflict" description="In Ref. 1; CAA37456." evidence="7" ref="1">
    <original>R</original>
    <variation>C</variation>
    <location>
        <position position="188"/>
    </location>
</feature>
<feature type="sequence conflict" description="In Ref. 1; CAA37456." evidence="7" ref="1">
    <original>YSL</original>
    <variation>TA</variation>
    <location>
        <begin position="311"/>
        <end position="313"/>
    </location>
</feature>
<feature type="sequence conflict" description="In Ref. 1; CAA37456." evidence="7" ref="1">
    <location>
        <position position="345"/>
    </location>
</feature>
<feature type="strand" evidence="9">
    <location>
        <begin position="5"/>
        <end position="13"/>
    </location>
</feature>
<feature type="helix" evidence="9">
    <location>
        <begin position="16"/>
        <end position="34"/>
    </location>
</feature>
<feature type="strand" evidence="9">
    <location>
        <begin position="38"/>
        <end position="42"/>
    </location>
</feature>
<feature type="helix" evidence="9">
    <location>
        <begin position="47"/>
        <end position="53"/>
    </location>
</feature>
<feature type="strand" evidence="9">
    <location>
        <begin position="54"/>
        <end position="57"/>
    </location>
</feature>
<feature type="helix" evidence="9">
    <location>
        <begin position="59"/>
        <end position="66"/>
    </location>
</feature>
<feature type="strand" evidence="9">
    <location>
        <begin position="68"/>
        <end position="75"/>
    </location>
</feature>
<feature type="helix" evidence="9">
    <location>
        <begin position="79"/>
        <end position="81"/>
    </location>
</feature>
<feature type="helix" evidence="9">
    <location>
        <begin position="86"/>
        <end position="88"/>
    </location>
</feature>
<feature type="helix" evidence="9">
    <location>
        <begin position="92"/>
        <end position="102"/>
    </location>
</feature>
<feature type="strand" evidence="9">
    <location>
        <begin position="106"/>
        <end position="112"/>
    </location>
</feature>
<feature type="helix" evidence="9">
    <location>
        <begin position="118"/>
        <end position="120"/>
    </location>
</feature>
<feature type="helix" evidence="9">
    <location>
        <begin position="125"/>
        <end position="130"/>
    </location>
</feature>
<feature type="strand" evidence="9">
    <location>
        <begin position="133"/>
        <end position="139"/>
    </location>
</feature>
<feature type="helix" evidence="9">
    <location>
        <begin position="143"/>
        <end position="145"/>
    </location>
</feature>
<feature type="strand" evidence="9">
    <location>
        <begin position="151"/>
        <end position="153"/>
    </location>
</feature>
<feature type="helix" evidence="9">
    <location>
        <begin position="156"/>
        <end position="158"/>
    </location>
</feature>
<feature type="strand" evidence="9">
    <location>
        <begin position="160"/>
        <end position="168"/>
    </location>
</feature>
<feature type="helix" evidence="9">
    <location>
        <begin position="169"/>
        <end position="184"/>
    </location>
</feature>
<feature type="turn" evidence="9">
    <location>
        <begin position="185"/>
        <end position="187"/>
    </location>
</feature>
<feature type="strand" evidence="9">
    <location>
        <begin position="188"/>
        <end position="194"/>
    </location>
</feature>
<feature type="turn" evidence="9">
    <location>
        <begin position="196"/>
        <end position="198"/>
    </location>
</feature>
<feature type="helix" evidence="9">
    <location>
        <begin position="200"/>
        <end position="213"/>
    </location>
</feature>
<feature type="strand" evidence="9">
    <location>
        <begin position="219"/>
        <end position="225"/>
    </location>
</feature>
<feature type="helix" evidence="9">
    <location>
        <begin position="226"/>
        <end position="235"/>
    </location>
</feature>
<feature type="helix" evidence="9">
    <location>
        <begin position="237"/>
        <end position="239"/>
    </location>
</feature>
<feature type="strand" evidence="9">
    <location>
        <begin position="241"/>
        <end position="245"/>
    </location>
</feature>
<feature type="helix" evidence="9">
    <location>
        <begin position="247"/>
        <end position="261"/>
    </location>
</feature>
<feature type="helix" evidence="9">
    <location>
        <begin position="264"/>
        <end position="266"/>
    </location>
</feature>
<feature type="strand" evidence="9">
    <location>
        <begin position="268"/>
        <end position="272"/>
    </location>
</feature>
<feature type="strand" evidence="9">
    <location>
        <begin position="278"/>
        <end position="284"/>
    </location>
</feature>
<feature type="helix" evidence="9">
    <location>
        <begin position="288"/>
        <end position="290"/>
    </location>
</feature>
<feature type="turn" evidence="9">
    <location>
        <begin position="291"/>
        <end position="294"/>
    </location>
</feature>
<feature type="helix" evidence="9">
    <location>
        <begin position="299"/>
        <end position="312"/>
    </location>
</feature>
<feature type="helix" evidence="9">
    <location>
        <begin position="316"/>
        <end position="331"/>
    </location>
</feature>
<feature type="turn" evidence="9">
    <location>
        <begin position="337"/>
        <end position="344"/>
    </location>
</feature>
<feature type="helix" evidence="9">
    <location>
        <begin position="348"/>
        <end position="360"/>
    </location>
</feature>